<feature type="chain" id="PRO_1000063695" description="UPF0213 protein SpyM50708">
    <location>
        <begin position="1"/>
        <end position="92"/>
    </location>
</feature>
<feature type="domain" description="GIY-YIG" evidence="1">
    <location>
        <begin position="4"/>
        <end position="80"/>
    </location>
</feature>
<proteinExistence type="inferred from homology"/>
<gene>
    <name type="ordered locus">SpyM50708</name>
</gene>
<organism>
    <name type="scientific">Streptococcus pyogenes serotype M5 (strain Manfredo)</name>
    <dbReference type="NCBI Taxonomy" id="160491"/>
    <lineage>
        <taxon>Bacteria</taxon>
        <taxon>Bacillati</taxon>
        <taxon>Bacillota</taxon>
        <taxon>Bacilli</taxon>
        <taxon>Lactobacillales</taxon>
        <taxon>Streptococcaceae</taxon>
        <taxon>Streptococcus</taxon>
    </lineage>
</organism>
<evidence type="ECO:0000255" key="1">
    <source>
        <dbReference type="PROSITE-ProRule" id="PRU00977"/>
    </source>
</evidence>
<evidence type="ECO:0000305" key="2"/>
<sequence length="92" mass="10706">MTTKKAYMYVLECADKTLYTGYTTDLKKRLATHNAGKGAKYTRYRLPVSLLYYEVFDSKEAAMSAEALFKKRKTRSQKLAYIATHQKEKKNH</sequence>
<reference key="1">
    <citation type="journal article" date="2007" name="J. Bacteriol.">
        <title>Complete genome of acute rheumatic fever-associated serotype M5 Streptococcus pyogenes strain Manfredo.</title>
        <authorList>
            <person name="Holden M.T.G."/>
            <person name="Scott A."/>
            <person name="Cherevach I."/>
            <person name="Chillingworth T."/>
            <person name="Churcher C."/>
            <person name="Cronin A."/>
            <person name="Dowd L."/>
            <person name="Feltwell T."/>
            <person name="Hamlin N."/>
            <person name="Holroyd S."/>
            <person name="Jagels K."/>
            <person name="Moule S."/>
            <person name="Mungall K."/>
            <person name="Quail M.A."/>
            <person name="Price C."/>
            <person name="Rabbinowitsch E."/>
            <person name="Sharp S."/>
            <person name="Skelton J."/>
            <person name="Whitehead S."/>
            <person name="Barrell B.G."/>
            <person name="Kehoe M."/>
            <person name="Parkhill J."/>
        </authorList>
    </citation>
    <scope>NUCLEOTIDE SEQUENCE [LARGE SCALE GENOMIC DNA]</scope>
    <source>
        <strain>Manfredo</strain>
    </source>
</reference>
<comment type="similarity">
    <text evidence="2">Belongs to the UPF0213 family.</text>
</comment>
<dbReference type="EMBL" id="AM295007">
    <property type="protein sequence ID" value="CAM30041.1"/>
    <property type="molecule type" value="Genomic_DNA"/>
</dbReference>
<dbReference type="RefSeq" id="WP_011017953.1">
    <property type="nucleotide sequence ID" value="NC_009332.1"/>
</dbReference>
<dbReference type="SMR" id="A2RDW6"/>
<dbReference type="KEGG" id="spf:SpyM50708"/>
<dbReference type="HOGENOM" id="CLU_135650_0_3_9"/>
<dbReference type="CDD" id="cd10456">
    <property type="entry name" value="GIY-YIG_UPF0213"/>
    <property type="match status" value="1"/>
</dbReference>
<dbReference type="Gene3D" id="3.40.1440.10">
    <property type="entry name" value="GIY-YIG endonuclease"/>
    <property type="match status" value="1"/>
</dbReference>
<dbReference type="InterPro" id="IPR000305">
    <property type="entry name" value="GIY-YIG_endonuc"/>
</dbReference>
<dbReference type="InterPro" id="IPR035901">
    <property type="entry name" value="GIY-YIG_endonuc_sf"/>
</dbReference>
<dbReference type="InterPro" id="IPR050190">
    <property type="entry name" value="UPF0213_domain"/>
</dbReference>
<dbReference type="PANTHER" id="PTHR34477">
    <property type="entry name" value="UPF0213 PROTEIN YHBQ"/>
    <property type="match status" value="1"/>
</dbReference>
<dbReference type="PANTHER" id="PTHR34477:SF1">
    <property type="entry name" value="UPF0213 PROTEIN YHBQ"/>
    <property type="match status" value="1"/>
</dbReference>
<dbReference type="Pfam" id="PF01541">
    <property type="entry name" value="GIY-YIG"/>
    <property type="match status" value="1"/>
</dbReference>
<dbReference type="SUPFAM" id="SSF82771">
    <property type="entry name" value="GIY-YIG endonuclease"/>
    <property type="match status" value="1"/>
</dbReference>
<dbReference type="PROSITE" id="PS50164">
    <property type="entry name" value="GIY_YIG"/>
    <property type="match status" value="1"/>
</dbReference>
<accession>A2RDW6</accession>
<name>Y708_STRPG</name>
<protein>
    <recommendedName>
        <fullName>UPF0213 protein SpyM50708</fullName>
    </recommendedName>
</protein>